<accession>Q88JX8</accession>
<feature type="chain" id="PRO_0000418497" description="4-oxalmesaconate hydratase">
    <location>
        <begin position="1"/>
        <end position="258"/>
    </location>
</feature>
<feature type="binding site" evidence="1">
    <location>
        <position position="28"/>
    </location>
    <ligand>
        <name>Zn(2+)</name>
        <dbReference type="ChEBI" id="CHEBI:29105"/>
    </ligand>
</feature>
<feature type="binding site" evidence="1">
    <location>
        <position position="31"/>
    </location>
    <ligand>
        <name>Zn(2+)</name>
        <dbReference type="ChEBI" id="CHEBI:29105"/>
    </ligand>
</feature>
<feature type="binding site" evidence="1">
    <location>
        <position position="141"/>
    </location>
    <ligand>
        <name>Zn(2+)</name>
        <dbReference type="ChEBI" id="CHEBI:29105"/>
    </ligand>
</feature>
<feature type="strand" evidence="4">
    <location>
        <begin position="21"/>
        <end position="28"/>
    </location>
</feature>
<feature type="helix" evidence="4">
    <location>
        <begin position="31"/>
        <end position="45"/>
    </location>
</feature>
<feature type="strand" evidence="4">
    <location>
        <begin position="49"/>
        <end position="55"/>
    </location>
</feature>
<feature type="turn" evidence="4">
    <location>
        <begin position="59"/>
        <end position="61"/>
    </location>
</feature>
<feature type="helix" evidence="4">
    <location>
        <begin position="64"/>
        <end position="68"/>
    </location>
</feature>
<feature type="helix" evidence="4">
    <location>
        <begin position="74"/>
        <end position="92"/>
    </location>
</feature>
<feature type="strand" evidence="4">
    <location>
        <begin position="94"/>
        <end position="98"/>
    </location>
</feature>
<feature type="strand" evidence="4">
    <location>
        <begin position="103"/>
        <end position="105"/>
    </location>
</feature>
<feature type="helix" evidence="4">
    <location>
        <begin position="110"/>
        <end position="123"/>
    </location>
</feature>
<feature type="strand" evidence="4">
    <location>
        <begin position="128"/>
        <end position="130"/>
    </location>
</feature>
<feature type="helix" evidence="4">
    <location>
        <begin position="140"/>
        <end position="156"/>
    </location>
</feature>
<feature type="strand" evidence="4">
    <location>
        <begin position="172"/>
        <end position="175"/>
    </location>
</feature>
<feature type="turn" evidence="4">
    <location>
        <begin position="180"/>
        <end position="184"/>
    </location>
</feature>
<feature type="strand" evidence="4">
    <location>
        <begin position="188"/>
        <end position="192"/>
    </location>
</feature>
<feature type="helix" evidence="4">
    <location>
        <begin position="194"/>
        <end position="196"/>
    </location>
</feature>
<feature type="helix" evidence="4">
    <location>
        <begin position="197"/>
        <end position="204"/>
    </location>
</feature>
<feature type="helix" evidence="4">
    <location>
        <begin position="211"/>
        <end position="230"/>
    </location>
</feature>
<feature type="strand" evidence="4">
    <location>
        <begin position="243"/>
        <end position="250"/>
    </location>
</feature>
<comment type="function">
    <text evidence="2">Catalyzes the conversion of oxalomesaconic acid enol (OMAenol) to 4-carboxy-4-hydroxy-2-oxoadipic acid (CHA). Mediates the third step of gallate degradation pathway.</text>
</comment>
<comment type="catalytic activity">
    <reaction evidence="2">
        <text>2-hydroxy-4-oxobutane-1,2,4-tricarboxylate = 4-carboxy-2-hydroxy-cis,cis-muconate + H2O</text>
        <dbReference type="Rhea" id="RHEA:17401"/>
        <dbReference type="ChEBI" id="CHEBI:15377"/>
        <dbReference type="ChEBI" id="CHEBI:58075"/>
        <dbReference type="ChEBI" id="CHEBI:58142"/>
        <dbReference type="EC" id="4.2.1.83"/>
    </reaction>
</comment>
<comment type="cofactor">
    <cofactor>
        <name>Zn(2+)</name>
        <dbReference type="ChEBI" id="CHEBI:29105"/>
    </cofactor>
    <text>Binds 1 zinc ion per subunit.</text>
</comment>
<comment type="biophysicochemical properties">
    <kinetics>
        <KM evidence="2">85 uM for (1E,3E)-4-hydroxybuta-1,3-diene-1,2,4-tricarboxylate</KM>
        <Vmax evidence="2">76.0 umol/min/mg enzyme</Vmax>
    </kinetics>
    <phDependence>
        <text evidence="2">Optimum pH is 7.0.</text>
    </phDependence>
    <temperatureDependence>
        <text evidence="2">Optimum temperature is 30 degrees Celsius.</text>
    </temperatureDependence>
</comment>
<comment type="disruption phenotype">
    <text evidence="2">Lacks 4-oxalmesaconate hydratase activity.</text>
</comment>
<comment type="similarity">
    <text evidence="3">Belongs to the MshB deacetylase family.</text>
</comment>
<name>GALB_PSEPK</name>
<proteinExistence type="evidence at protein level"/>
<organism>
    <name type="scientific">Pseudomonas putida (strain ATCC 47054 / DSM 6125 / CFBP 8728 / NCIMB 11950 / KT2440)</name>
    <dbReference type="NCBI Taxonomy" id="160488"/>
    <lineage>
        <taxon>Bacteria</taxon>
        <taxon>Pseudomonadati</taxon>
        <taxon>Pseudomonadota</taxon>
        <taxon>Gammaproteobacteria</taxon>
        <taxon>Pseudomonadales</taxon>
        <taxon>Pseudomonadaceae</taxon>
        <taxon>Pseudomonas</taxon>
    </lineage>
</organism>
<sequence>MTSCAHPHCRSQRNMNTPQKSALVVSAHSADFVWRAGGAIALHAEQGYAMHVVCLSFGERGESAKLWRKGEMTEAKVKDARREEAMAAAEILGASVEFFDIGDYPMRADKDTLFRLADVYRRVQPEFVLSHSLKDPYNYDHPLAMHLAQEARIIAQAEGYKPGEKIVGAPPVYAFEPHQPEQCEWRPDTFLDITSVWDKKYAAIQCMAGQEHLWEYYTRVALQRGVQAKRNVGITSARNIVYAEGLQSVFPRVTENLA</sequence>
<keyword id="KW-0002">3D-structure</keyword>
<keyword id="KW-0058">Aromatic hydrocarbons catabolism</keyword>
<keyword id="KW-0456">Lyase</keyword>
<keyword id="KW-0479">Metal-binding</keyword>
<keyword id="KW-1185">Reference proteome</keyword>
<keyword id="KW-0862">Zinc</keyword>
<dbReference type="EC" id="4.2.1.83"/>
<dbReference type="EMBL" id="AE015451">
    <property type="protein sequence ID" value="AAN68127.1"/>
    <property type="molecule type" value="Genomic_DNA"/>
</dbReference>
<dbReference type="RefSeq" id="NP_744663.1">
    <property type="nucleotide sequence ID" value="NC_002947.4"/>
</dbReference>
<dbReference type="RefSeq" id="WP_010953449.1">
    <property type="nucleotide sequence ID" value="NZ_CP169744.1"/>
</dbReference>
<dbReference type="PDB" id="5CGZ">
    <property type="method" value="X-ray"/>
    <property type="resolution" value="2.10 A"/>
    <property type="chains" value="A/B=20-258"/>
</dbReference>
<dbReference type="PDBsum" id="5CGZ"/>
<dbReference type="SMR" id="Q88JX8"/>
<dbReference type="STRING" id="160488.PP_2515"/>
<dbReference type="PaxDb" id="160488-PP_2515"/>
<dbReference type="GeneID" id="83680898"/>
<dbReference type="KEGG" id="ppu:PP_2515"/>
<dbReference type="PATRIC" id="fig|160488.4.peg.2670"/>
<dbReference type="eggNOG" id="COG2120">
    <property type="taxonomic scope" value="Bacteria"/>
</dbReference>
<dbReference type="HOGENOM" id="CLU_049311_1_0_6"/>
<dbReference type="OrthoDB" id="7253851at2"/>
<dbReference type="PhylomeDB" id="Q88JX8"/>
<dbReference type="BioCyc" id="MetaCyc:G1G01-2699-MONOMER"/>
<dbReference type="BioCyc" id="PPUT160488:G1G01-2699-MONOMER"/>
<dbReference type="Proteomes" id="UP000000556">
    <property type="component" value="Chromosome"/>
</dbReference>
<dbReference type="GO" id="GO:0047584">
    <property type="term" value="F:4-oxalmesaconate hydratase activity"/>
    <property type="evidence" value="ECO:0000314"/>
    <property type="project" value="UniProtKB"/>
</dbReference>
<dbReference type="GO" id="GO:0016811">
    <property type="term" value="F:hydrolase activity, acting on carbon-nitrogen (but not peptide) bonds, in linear amides"/>
    <property type="evidence" value="ECO:0007669"/>
    <property type="project" value="TreeGrafter"/>
</dbReference>
<dbReference type="GO" id="GO:0046872">
    <property type="term" value="F:metal ion binding"/>
    <property type="evidence" value="ECO:0007669"/>
    <property type="project" value="UniProtKB-KW"/>
</dbReference>
<dbReference type="GO" id="GO:0019396">
    <property type="term" value="P:gallate catabolic process"/>
    <property type="evidence" value="ECO:0000314"/>
    <property type="project" value="UniProtKB"/>
</dbReference>
<dbReference type="FunFam" id="3.40.50.10320:FF:000006">
    <property type="entry name" value="4-oxalmesaconate hydratase"/>
    <property type="match status" value="1"/>
</dbReference>
<dbReference type="Gene3D" id="3.40.50.10320">
    <property type="entry name" value="LmbE-like"/>
    <property type="match status" value="1"/>
</dbReference>
<dbReference type="InterPro" id="IPR003737">
    <property type="entry name" value="GlcNAc_PI_deacetylase-related"/>
</dbReference>
<dbReference type="InterPro" id="IPR024078">
    <property type="entry name" value="LmbE-like_dom_sf"/>
</dbReference>
<dbReference type="PANTHER" id="PTHR12993:SF29">
    <property type="entry name" value="BLR3841 PROTEIN"/>
    <property type="match status" value="1"/>
</dbReference>
<dbReference type="PANTHER" id="PTHR12993">
    <property type="entry name" value="N-ACETYLGLUCOSAMINYL-PHOSPHATIDYLINOSITOL DE-N-ACETYLASE-RELATED"/>
    <property type="match status" value="1"/>
</dbReference>
<dbReference type="Pfam" id="PF02585">
    <property type="entry name" value="PIG-L"/>
    <property type="match status" value="1"/>
</dbReference>
<dbReference type="SUPFAM" id="SSF102588">
    <property type="entry name" value="LmbE-like"/>
    <property type="match status" value="1"/>
</dbReference>
<protein>
    <recommendedName>
        <fullName>4-oxalmesaconate hydratase</fullName>
        <shortName>OMA hydratase</shortName>
        <ecNumber>4.2.1.83</ecNumber>
    </recommendedName>
    <alternativeName>
        <fullName>Gallate degradation protein B</fullName>
    </alternativeName>
</protein>
<gene>
    <name type="primary">galB</name>
    <name type="ordered locus">PP_2515</name>
</gene>
<reference key="1">
    <citation type="journal article" date="2002" name="Environ. Microbiol.">
        <title>Complete genome sequence and comparative analysis of the metabolically versatile Pseudomonas putida KT2440.</title>
        <authorList>
            <person name="Nelson K.E."/>
            <person name="Weinel C."/>
            <person name="Paulsen I.T."/>
            <person name="Dodson R.J."/>
            <person name="Hilbert H."/>
            <person name="Martins dos Santos V.A.P."/>
            <person name="Fouts D.E."/>
            <person name="Gill S.R."/>
            <person name="Pop M."/>
            <person name="Holmes M."/>
            <person name="Brinkac L.M."/>
            <person name="Beanan M.J."/>
            <person name="DeBoy R.T."/>
            <person name="Daugherty S.C."/>
            <person name="Kolonay J.F."/>
            <person name="Madupu R."/>
            <person name="Nelson W.C."/>
            <person name="White O."/>
            <person name="Peterson J.D."/>
            <person name="Khouri H.M."/>
            <person name="Hance I."/>
            <person name="Chris Lee P."/>
            <person name="Holtzapple E.K."/>
            <person name="Scanlan D."/>
            <person name="Tran K."/>
            <person name="Moazzez A."/>
            <person name="Utterback T.R."/>
            <person name="Rizzo M."/>
            <person name="Lee K."/>
            <person name="Kosack D."/>
            <person name="Moestl D."/>
            <person name="Wedler H."/>
            <person name="Lauber J."/>
            <person name="Stjepandic D."/>
            <person name="Hoheisel J."/>
            <person name="Straetz M."/>
            <person name="Heim S."/>
            <person name="Kiewitz C."/>
            <person name="Eisen J.A."/>
            <person name="Timmis K.N."/>
            <person name="Duesterhoeft A."/>
            <person name="Tuemmler B."/>
            <person name="Fraser C.M."/>
        </authorList>
    </citation>
    <scope>NUCLEOTIDE SEQUENCE [LARGE SCALE GENOMIC DNA]</scope>
    <source>
        <strain>ATCC 47054 / DSM 6125 / CFBP 8728 / NCIMB 11950 / KT2440</strain>
    </source>
</reference>
<reference key="2">
    <citation type="journal article" date="2011" name="Mol. Microbiol.">
        <title>Unravelling the gallic acid degradation pathway in bacteria: the gal cluster from Pseudomonas putida.</title>
        <authorList>
            <person name="Nogales J."/>
            <person name="Canales A."/>
            <person name="Jimenez-Barbero J."/>
            <person name="Serra B."/>
            <person name="Pingarron J.M."/>
            <person name="Garcia J.L."/>
            <person name="Diaz E."/>
        </authorList>
    </citation>
    <scope>FUNCTION</scope>
    <scope>CATALYTIC ACTIVITY</scope>
    <scope>PATHWAY</scope>
    <scope>BIOPHYSICOCHEMICAL PROPERTIES</scope>
    <scope>DISRUPTION PHENOTYPE</scope>
    <source>
        <strain>ATCC 47054 / DSM 6125 / CFBP 8728 / NCIMB 11950 / KT2440</strain>
    </source>
</reference>
<evidence type="ECO:0000250" key="1"/>
<evidence type="ECO:0000269" key="2">
    <source>
    </source>
</evidence>
<evidence type="ECO:0000305" key="3"/>
<evidence type="ECO:0007829" key="4">
    <source>
        <dbReference type="PDB" id="5CGZ"/>
    </source>
</evidence>